<reference key="1">
    <citation type="journal article" date="2001" name="Nature">
        <title>Genome sequence of enterohaemorrhagic Escherichia coli O157:H7.</title>
        <authorList>
            <person name="Perna N.T."/>
            <person name="Plunkett G. III"/>
            <person name="Burland V."/>
            <person name="Mau B."/>
            <person name="Glasner J.D."/>
            <person name="Rose D.J."/>
            <person name="Mayhew G.F."/>
            <person name="Evans P.S."/>
            <person name="Gregor J."/>
            <person name="Kirkpatrick H.A."/>
            <person name="Posfai G."/>
            <person name="Hackett J."/>
            <person name="Klink S."/>
            <person name="Boutin A."/>
            <person name="Shao Y."/>
            <person name="Miller L."/>
            <person name="Grotbeck E.J."/>
            <person name="Davis N.W."/>
            <person name="Lim A."/>
            <person name="Dimalanta E.T."/>
            <person name="Potamousis K."/>
            <person name="Apodaca J."/>
            <person name="Anantharaman T.S."/>
            <person name="Lin J."/>
            <person name="Yen G."/>
            <person name="Schwartz D.C."/>
            <person name="Welch R.A."/>
            <person name="Blattner F.R."/>
        </authorList>
    </citation>
    <scope>NUCLEOTIDE SEQUENCE [LARGE SCALE GENOMIC DNA]</scope>
    <source>
        <strain>O157:H7 / EDL933 / ATCC 700927 / EHEC</strain>
    </source>
</reference>
<reference key="2">
    <citation type="journal article" date="2001" name="DNA Res.">
        <title>Complete genome sequence of enterohemorrhagic Escherichia coli O157:H7 and genomic comparison with a laboratory strain K-12.</title>
        <authorList>
            <person name="Hayashi T."/>
            <person name="Makino K."/>
            <person name="Ohnishi M."/>
            <person name="Kurokawa K."/>
            <person name="Ishii K."/>
            <person name="Yokoyama K."/>
            <person name="Han C.-G."/>
            <person name="Ohtsubo E."/>
            <person name="Nakayama K."/>
            <person name="Murata T."/>
            <person name="Tanaka M."/>
            <person name="Tobe T."/>
            <person name="Iida T."/>
            <person name="Takami H."/>
            <person name="Honda T."/>
            <person name="Sasakawa C."/>
            <person name="Ogasawara N."/>
            <person name="Yasunaga T."/>
            <person name="Kuhara S."/>
            <person name="Shiba T."/>
            <person name="Hattori M."/>
            <person name="Shinagawa H."/>
        </authorList>
    </citation>
    <scope>NUCLEOTIDE SEQUENCE [LARGE SCALE GENOMIC DNA]</scope>
    <source>
        <strain>O157:H7 / Sakai / RIMD 0509952 / EHEC</strain>
    </source>
</reference>
<comment type="function">
    <text evidence="1">Catalyzes the condensation of iminoaspartate with dihydroxyacetone phosphate to form quinolinate.</text>
</comment>
<comment type="catalytic activity">
    <reaction evidence="1">
        <text>iminosuccinate + dihydroxyacetone phosphate = quinolinate + phosphate + 2 H2O + H(+)</text>
        <dbReference type="Rhea" id="RHEA:25888"/>
        <dbReference type="ChEBI" id="CHEBI:15377"/>
        <dbReference type="ChEBI" id="CHEBI:15378"/>
        <dbReference type="ChEBI" id="CHEBI:29959"/>
        <dbReference type="ChEBI" id="CHEBI:43474"/>
        <dbReference type="ChEBI" id="CHEBI:57642"/>
        <dbReference type="ChEBI" id="CHEBI:77875"/>
        <dbReference type="EC" id="2.5.1.72"/>
    </reaction>
    <physiologicalReaction direction="left-to-right" evidence="1">
        <dbReference type="Rhea" id="RHEA:25889"/>
    </physiologicalReaction>
</comment>
<comment type="cofactor">
    <cofactor evidence="1">
        <name>[4Fe-4S] cluster</name>
        <dbReference type="ChEBI" id="CHEBI:49883"/>
    </cofactor>
    <text evidence="1">Binds 1 [4Fe-4S] cluster per subunit.</text>
</comment>
<comment type="pathway">
    <text evidence="1">Cofactor biosynthesis; NAD(+) biosynthesis; quinolinate from iminoaspartate: step 1/1.</text>
</comment>
<comment type="subcellular location">
    <subcellularLocation>
        <location evidence="1">Cytoplasm</location>
    </subcellularLocation>
</comment>
<comment type="similarity">
    <text evidence="1">Belongs to the quinolinate synthase family. Type 1 subfamily.</text>
</comment>
<dbReference type="EC" id="2.5.1.72" evidence="1"/>
<dbReference type="EMBL" id="AE005174">
    <property type="protein sequence ID" value="AAG55079.1"/>
    <property type="molecule type" value="Genomic_DNA"/>
</dbReference>
<dbReference type="EMBL" id="BA000007">
    <property type="protein sequence ID" value="BAB34201.1"/>
    <property type="molecule type" value="Genomic_DNA"/>
</dbReference>
<dbReference type="PIR" id="B99726">
    <property type="entry name" value="B99726"/>
</dbReference>
<dbReference type="PIR" id="C85577">
    <property type="entry name" value="C85577"/>
</dbReference>
<dbReference type="RefSeq" id="NP_308805.1">
    <property type="nucleotide sequence ID" value="NC_002695.1"/>
</dbReference>
<dbReference type="RefSeq" id="WP_000115278.1">
    <property type="nucleotide sequence ID" value="NZ_VOAI01000019.1"/>
</dbReference>
<dbReference type="SMR" id="Q8X963"/>
<dbReference type="STRING" id="155864.Z0919"/>
<dbReference type="GeneID" id="917516"/>
<dbReference type="KEGG" id="ece:Z0919"/>
<dbReference type="KEGG" id="ecs:ECs_0778"/>
<dbReference type="PATRIC" id="fig|386585.9.peg.897"/>
<dbReference type="eggNOG" id="COG0379">
    <property type="taxonomic scope" value="Bacteria"/>
</dbReference>
<dbReference type="HOGENOM" id="CLU_047382_1_0_6"/>
<dbReference type="OMA" id="CFCSTMN"/>
<dbReference type="UniPathway" id="UPA00253">
    <property type="reaction ID" value="UER00327"/>
</dbReference>
<dbReference type="Proteomes" id="UP000000558">
    <property type="component" value="Chromosome"/>
</dbReference>
<dbReference type="Proteomes" id="UP000002519">
    <property type="component" value="Chromosome"/>
</dbReference>
<dbReference type="GO" id="GO:0005829">
    <property type="term" value="C:cytosol"/>
    <property type="evidence" value="ECO:0007669"/>
    <property type="project" value="TreeGrafter"/>
</dbReference>
<dbReference type="GO" id="GO:0051539">
    <property type="term" value="F:4 iron, 4 sulfur cluster binding"/>
    <property type="evidence" value="ECO:0007669"/>
    <property type="project" value="UniProtKB-KW"/>
</dbReference>
<dbReference type="GO" id="GO:0046872">
    <property type="term" value="F:metal ion binding"/>
    <property type="evidence" value="ECO:0007669"/>
    <property type="project" value="UniProtKB-KW"/>
</dbReference>
<dbReference type="GO" id="GO:0008987">
    <property type="term" value="F:quinolinate synthetase A activity"/>
    <property type="evidence" value="ECO:0007669"/>
    <property type="project" value="UniProtKB-UniRule"/>
</dbReference>
<dbReference type="GO" id="GO:0034628">
    <property type="term" value="P:'de novo' NAD biosynthetic process from L-aspartate"/>
    <property type="evidence" value="ECO:0007669"/>
    <property type="project" value="TreeGrafter"/>
</dbReference>
<dbReference type="FunFam" id="3.40.50.10800:FF:000001">
    <property type="entry name" value="Quinolinate synthase A"/>
    <property type="match status" value="1"/>
</dbReference>
<dbReference type="FunFam" id="3.40.50.10800:FF:000003">
    <property type="entry name" value="Quinolinate synthase A"/>
    <property type="match status" value="1"/>
</dbReference>
<dbReference type="Gene3D" id="3.40.50.10800">
    <property type="entry name" value="NadA-like"/>
    <property type="match status" value="3"/>
</dbReference>
<dbReference type="HAMAP" id="MF_00567">
    <property type="entry name" value="NadA_type1"/>
    <property type="match status" value="1"/>
</dbReference>
<dbReference type="InterPro" id="IPR003473">
    <property type="entry name" value="NadA"/>
</dbReference>
<dbReference type="InterPro" id="IPR036094">
    <property type="entry name" value="NadA_sf"/>
</dbReference>
<dbReference type="InterPro" id="IPR023513">
    <property type="entry name" value="Quinolinate_synth_A_type1"/>
</dbReference>
<dbReference type="NCBIfam" id="TIGR00550">
    <property type="entry name" value="nadA"/>
    <property type="match status" value="1"/>
</dbReference>
<dbReference type="NCBIfam" id="NF006877">
    <property type="entry name" value="PRK09375.1-1"/>
    <property type="match status" value="1"/>
</dbReference>
<dbReference type="NCBIfam" id="NF006878">
    <property type="entry name" value="PRK09375.1-2"/>
    <property type="match status" value="1"/>
</dbReference>
<dbReference type="PANTHER" id="PTHR30573:SF0">
    <property type="entry name" value="QUINOLINATE SYNTHASE, CHLOROPLASTIC"/>
    <property type="match status" value="1"/>
</dbReference>
<dbReference type="PANTHER" id="PTHR30573">
    <property type="entry name" value="QUINOLINATE SYNTHETASE A"/>
    <property type="match status" value="1"/>
</dbReference>
<dbReference type="Pfam" id="PF02445">
    <property type="entry name" value="NadA"/>
    <property type="match status" value="1"/>
</dbReference>
<dbReference type="SUPFAM" id="SSF142754">
    <property type="entry name" value="NadA-like"/>
    <property type="match status" value="1"/>
</dbReference>
<protein>
    <recommendedName>
        <fullName evidence="1">Quinolinate synthase</fullName>
        <ecNumber evidence="1">2.5.1.72</ecNumber>
    </recommendedName>
</protein>
<keyword id="KW-0004">4Fe-4S</keyword>
<keyword id="KW-0963">Cytoplasm</keyword>
<keyword id="KW-0408">Iron</keyword>
<keyword id="KW-0411">Iron-sulfur</keyword>
<keyword id="KW-0479">Metal-binding</keyword>
<keyword id="KW-0662">Pyridine nucleotide biosynthesis</keyword>
<keyword id="KW-1185">Reference proteome</keyword>
<keyword id="KW-0808">Transferase</keyword>
<gene>
    <name evidence="1" type="primary">nadA</name>
    <name type="ordered locus">Z0919</name>
    <name type="ordered locus">ECs0778</name>
</gene>
<organism>
    <name type="scientific">Escherichia coli O157:H7</name>
    <dbReference type="NCBI Taxonomy" id="83334"/>
    <lineage>
        <taxon>Bacteria</taxon>
        <taxon>Pseudomonadati</taxon>
        <taxon>Pseudomonadota</taxon>
        <taxon>Gammaproteobacteria</taxon>
        <taxon>Enterobacterales</taxon>
        <taxon>Enterobacteriaceae</taxon>
        <taxon>Escherichia</taxon>
    </lineage>
</organism>
<accession>Q8X963</accession>
<proteinExistence type="inferred from homology"/>
<sequence length="347" mass="38281">MSVMFDPDTAIYPFPPKPTPLSIDEKAYYREKIKRLLKERNAVMVAHYYTDPEIQQLAEETGGCISDSLEMARFGAKHPASTLLVAGVRFMGETAKILSPEKTILMPTLQAECSLDLGCPVEEFNAFCDAHPDRTVVVYANTSAAVKARADWVVTSSIAVELIDHLDSLGEKIIWAPDKHLGRYVQKKTGADILCWQGACIVHDEFKTQALTRLQEEYPDAAILVHPESPQAIVDMADAVGSTSQLIAAAKTLPHQRLIVATDRGIFYKMQQAVPDKELLEAPTAGEGATCRSCAHCPWMAMNGLQAIAEALEQEGSNYEVHVDERLRERALVPLNRMLDFAATLRG</sequence>
<name>NADA_ECO57</name>
<feature type="chain" id="PRO_0000155762" description="Quinolinate synthase">
    <location>
        <begin position="1"/>
        <end position="347"/>
    </location>
</feature>
<feature type="binding site" evidence="1">
    <location>
        <position position="47"/>
    </location>
    <ligand>
        <name>iminosuccinate</name>
        <dbReference type="ChEBI" id="CHEBI:77875"/>
    </ligand>
</feature>
<feature type="binding site" evidence="1">
    <location>
        <position position="68"/>
    </location>
    <ligand>
        <name>iminosuccinate</name>
        <dbReference type="ChEBI" id="CHEBI:77875"/>
    </ligand>
</feature>
<feature type="binding site" evidence="1">
    <location>
        <position position="113"/>
    </location>
    <ligand>
        <name>[4Fe-4S] cluster</name>
        <dbReference type="ChEBI" id="CHEBI:49883"/>
    </ligand>
</feature>
<feature type="binding site" evidence="1">
    <location>
        <begin position="139"/>
        <end position="141"/>
    </location>
    <ligand>
        <name>iminosuccinate</name>
        <dbReference type="ChEBI" id="CHEBI:77875"/>
    </ligand>
</feature>
<feature type="binding site" evidence="1">
    <location>
        <position position="156"/>
    </location>
    <ligand>
        <name>iminosuccinate</name>
        <dbReference type="ChEBI" id="CHEBI:77875"/>
    </ligand>
</feature>
<feature type="binding site" evidence="1">
    <location>
        <position position="200"/>
    </location>
    <ligand>
        <name>[4Fe-4S] cluster</name>
        <dbReference type="ChEBI" id="CHEBI:49883"/>
    </ligand>
</feature>
<feature type="binding site" evidence="1">
    <location>
        <begin position="226"/>
        <end position="228"/>
    </location>
    <ligand>
        <name>iminosuccinate</name>
        <dbReference type="ChEBI" id="CHEBI:77875"/>
    </ligand>
</feature>
<feature type="binding site" evidence="1">
    <location>
        <position position="243"/>
    </location>
    <ligand>
        <name>iminosuccinate</name>
        <dbReference type="ChEBI" id="CHEBI:77875"/>
    </ligand>
</feature>
<feature type="binding site" evidence="1">
    <location>
        <position position="297"/>
    </location>
    <ligand>
        <name>[4Fe-4S] cluster</name>
        <dbReference type="ChEBI" id="CHEBI:49883"/>
    </ligand>
</feature>
<evidence type="ECO:0000255" key="1">
    <source>
        <dbReference type="HAMAP-Rule" id="MF_00567"/>
    </source>
</evidence>